<organism>
    <name type="scientific">Staphylococcus aureus (strain MW2)</name>
    <dbReference type="NCBI Taxonomy" id="196620"/>
    <lineage>
        <taxon>Bacteria</taxon>
        <taxon>Bacillati</taxon>
        <taxon>Bacillota</taxon>
        <taxon>Bacilli</taxon>
        <taxon>Bacillales</taxon>
        <taxon>Staphylococcaceae</taxon>
        <taxon>Staphylococcus</taxon>
    </lineage>
</organism>
<dbReference type="EMBL" id="BA000033">
    <property type="protein sequence ID" value="BAB95384.1"/>
    <property type="molecule type" value="Genomic_DNA"/>
</dbReference>
<dbReference type="RefSeq" id="WP_000134765.1">
    <property type="nucleotide sequence ID" value="NC_003923.1"/>
</dbReference>
<dbReference type="SMR" id="P64086"/>
<dbReference type="KEGG" id="sam:MW1519"/>
<dbReference type="HOGENOM" id="CLU_038009_1_0_9"/>
<dbReference type="GO" id="GO:0005829">
    <property type="term" value="C:cytosol"/>
    <property type="evidence" value="ECO:0007669"/>
    <property type="project" value="TreeGrafter"/>
</dbReference>
<dbReference type="GO" id="GO:0005886">
    <property type="term" value="C:plasma membrane"/>
    <property type="evidence" value="ECO:0007669"/>
    <property type="project" value="UniProtKB-SubCell"/>
</dbReference>
<dbReference type="GO" id="GO:0005525">
    <property type="term" value="F:GTP binding"/>
    <property type="evidence" value="ECO:0007669"/>
    <property type="project" value="UniProtKB-UniRule"/>
</dbReference>
<dbReference type="GO" id="GO:0003924">
    <property type="term" value="F:GTPase activity"/>
    <property type="evidence" value="ECO:0007669"/>
    <property type="project" value="UniProtKB-UniRule"/>
</dbReference>
<dbReference type="GO" id="GO:0043024">
    <property type="term" value="F:ribosomal small subunit binding"/>
    <property type="evidence" value="ECO:0007669"/>
    <property type="project" value="TreeGrafter"/>
</dbReference>
<dbReference type="GO" id="GO:0070181">
    <property type="term" value="F:small ribosomal subunit rRNA binding"/>
    <property type="evidence" value="ECO:0007669"/>
    <property type="project" value="UniProtKB-UniRule"/>
</dbReference>
<dbReference type="GO" id="GO:0000028">
    <property type="term" value="P:ribosomal small subunit assembly"/>
    <property type="evidence" value="ECO:0007669"/>
    <property type="project" value="TreeGrafter"/>
</dbReference>
<dbReference type="CDD" id="cd04163">
    <property type="entry name" value="Era"/>
    <property type="match status" value="1"/>
</dbReference>
<dbReference type="CDD" id="cd22534">
    <property type="entry name" value="KH-II_Era"/>
    <property type="match status" value="1"/>
</dbReference>
<dbReference type="FunFam" id="3.30.300.20:FF:000003">
    <property type="entry name" value="GTPase Era"/>
    <property type="match status" value="1"/>
</dbReference>
<dbReference type="FunFam" id="3.40.50.300:FF:000094">
    <property type="entry name" value="GTPase Era"/>
    <property type="match status" value="1"/>
</dbReference>
<dbReference type="Gene3D" id="3.30.300.20">
    <property type="match status" value="1"/>
</dbReference>
<dbReference type="Gene3D" id="3.40.50.300">
    <property type="entry name" value="P-loop containing nucleotide triphosphate hydrolases"/>
    <property type="match status" value="1"/>
</dbReference>
<dbReference type="HAMAP" id="MF_00367">
    <property type="entry name" value="GTPase_Era"/>
    <property type="match status" value="1"/>
</dbReference>
<dbReference type="InterPro" id="IPR030388">
    <property type="entry name" value="G_ERA_dom"/>
</dbReference>
<dbReference type="InterPro" id="IPR006073">
    <property type="entry name" value="GTP-bd"/>
</dbReference>
<dbReference type="InterPro" id="IPR005662">
    <property type="entry name" value="GTPase_Era-like"/>
</dbReference>
<dbReference type="InterPro" id="IPR015946">
    <property type="entry name" value="KH_dom-like_a/b"/>
</dbReference>
<dbReference type="InterPro" id="IPR004044">
    <property type="entry name" value="KH_dom_type_2"/>
</dbReference>
<dbReference type="InterPro" id="IPR009019">
    <property type="entry name" value="KH_sf_prok-type"/>
</dbReference>
<dbReference type="InterPro" id="IPR027417">
    <property type="entry name" value="P-loop_NTPase"/>
</dbReference>
<dbReference type="InterPro" id="IPR005225">
    <property type="entry name" value="Small_GTP-bd"/>
</dbReference>
<dbReference type="NCBIfam" id="TIGR00436">
    <property type="entry name" value="era"/>
    <property type="match status" value="1"/>
</dbReference>
<dbReference type="NCBIfam" id="NF000908">
    <property type="entry name" value="PRK00089.1"/>
    <property type="match status" value="1"/>
</dbReference>
<dbReference type="NCBIfam" id="TIGR00231">
    <property type="entry name" value="small_GTP"/>
    <property type="match status" value="1"/>
</dbReference>
<dbReference type="PANTHER" id="PTHR42698">
    <property type="entry name" value="GTPASE ERA"/>
    <property type="match status" value="1"/>
</dbReference>
<dbReference type="PANTHER" id="PTHR42698:SF1">
    <property type="entry name" value="GTPASE ERA, MITOCHONDRIAL"/>
    <property type="match status" value="1"/>
</dbReference>
<dbReference type="Pfam" id="PF07650">
    <property type="entry name" value="KH_2"/>
    <property type="match status" value="1"/>
</dbReference>
<dbReference type="Pfam" id="PF01926">
    <property type="entry name" value="MMR_HSR1"/>
    <property type="match status" value="1"/>
</dbReference>
<dbReference type="SUPFAM" id="SSF52540">
    <property type="entry name" value="P-loop containing nucleoside triphosphate hydrolases"/>
    <property type="match status" value="1"/>
</dbReference>
<dbReference type="SUPFAM" id="SSF54814">
    <property type="entry name" value="Prokaryotic type KH domain (KH-domain type II)"/>
    <property type="match status" value="1"/>
</dbReference>
<dbReference type="PROSITE" id="PS51713">
    <property type="entry name" value="G_ERA"/>
    <property type="match status" value="1"/>
</dbReference>
<dbReference type="PROSITE" id="PS50823">
    <property type="entry name" value="KH_TYPE_2"/>
    <property type="match status" value="1"/>
</dbReference>
<comment type="function">
    <text evidence="1">An essential GTPase that binds both GDP and GTP, with rapid nucleotide exchange. Plays a role in 16S rRNA processing and 30S ribosomal subunit biogenesis and possibly also in cell cycle regulation and energy metabolism.</text>
</comment>
<comment type="subunit">
    <text evidence="1">Monomer.</text>
</comment>
<comment type="subcellular location">
    <subcellularLocation>
        <location>Cytoplasm</location>
    </subcellularLocation>
    <subcellularLocation>
        <location evidence="1">Cell membrane</location>
        <topology evidence="1">Peripheral membrane protein</topology>
    </subcellularLocation>
</comment>
<comment type="similarity">
    <text evidence="1 2">Belongs to the TRAFAC class TrmE-Era-EngA-EngB-Septin-like GTPase superfamily. Era GTPase family.</text>
</comment>
<evidence type="ECO:0000255" key="1">
    <source>
        <dbReference type="HAMAP-Rule" id="MF_00367"/>
    </source>
</evidence>
<evidence type="ECO:0000255" key="2">
    <source>
        <dbReference type="PROSITE-ProRule" id="PRU01050"/>
    </source>
</evidence>
<proteinExistence type="inferred from homology"/>
<protein>
    <recommendedName>
        <fullName evidence="1">GTPase Era</fullName>
    </recommendedName>
</protein>
<feature type="chain" id="PRO_0000180051" description="GTPase Era">
    <location>
        <begin position="1"/>
        <end position="299"/>
    </location>
</feature>
<feature type="domain" description="Era-type G" evidence="2">
    <location>
        <begin position="5"/>
        <end position="172"/>
    </location>
</feature>
<feature type="domain" description="KH type-2" evidence="1">
    <location>
        <begin position="203"/>
        <end position="280"/>
    </location>
</feature>
<feature type="region of interest" description="G1" evidence="2">
    <location>
        <begin position="13"/>
        <end position="20"/>
    </location>
</feature>
<feature type="region of interest" description="G2" evidence="2">
    <location>
        <begin position="39"/>
        <end position="43"/>
    </location>
</feature>
<feature type="region of interest" description="G3" evidence="2">
    <location>
        <begin position="60"/>
        <end position="63"/>
    </location>
</feature>
<feature type="region of interest" description="G4" evidence="2">
    <location>
        <begin position="122"/>
        <end position="125"/>
    </location>
</feature>
<feature type="region of interest" description="G5" evidence="2">
    <location>
        <begin position="151"/>
        <end position="153"/>
    </location>
</feature>
<feature type="binding site" evidence="1">
    <location>
        <begin position="13"/>
        <end position="20"/>
    </location>
    <ligand>
        <name>GTP</name>
        <dbReference type="ChEBI" id="CHEBI:37565"/>
    </ligand>
</feature>
<feature type="binding site" evidence="1">
    <location>
        <begin position="60"/>
        <end position="64"/>
    </location>
    <ligand>
        <name>GTP</name>
        <dbReference type="ChEBI" id="CHEBI:37565"/>
    </ligand>
</feature>
<feature type="binding site" evidence="1">
    <location>
        <begin position="122"/>
        <end position="125"/>
    </location>
    <ligand>
        <name>GTP</name>
        <dbReference type="ChEBI" id="CHEBI:37565"/>
    </ligand>
</feature>
<reference key="1">
    <citation type="journal article" date="2002" name="Lancet">
        <title>Genome and virulence determinants of high virulence community-acquired MRSA.</title>
        <authorList>
            <person name="Baba T."/>
            <person name="Takeuchi F."/>
            <person name="Kuroda M."/>
            <person name="Yuzawa H."/>
            <person name="Aoki K."/>
            <person name="Oguchi A."/>
            <person name="Nagai Y."/>
            <person name="Iwama N."/>
            <person name="Asano K."/>
            <person name="Naimi T."/>
            <person name="Kuroda H."/>
            <person name="Cui L."/>
            <person name="Yamamoto K."/>
            <person name="Hiramatsu K."/>
        </authorList>
    </citation>
    <scope>NUCLEOTIDE SEQUENCE [LARGE SCALE GENOMIC DNA]</scope>
    <source>
        <strain>MW2</strain>
    </source>
</reference>
<keyword id="KW-1003">Cell membrane</keyword>
<keyword id="KW-0963">Cytoplasm</keyword>
<keyword id="KW-0342">GTP-binding</keyword>
<keyword id="KW-0472">Membrane</keyword>
<keyword id="KW-0547">Nucleotide-binding</keyword>
<keyword id="KW-0690">Ribosome biogenesis</keyword>
<keyword id="KW-0694">RNA-binding</keyword>
<keyword id="KW-0699">rRNA-binding</keyword>
<accession>P64086</accession>
<accession>Q99TS9</accession>
<gene>
    <name evidence="1" type="primary">era</name>
    <name type="synonym">bex</name>
    <name type="ordered locus">MW1519</name>
</gene>
<name>ERA_STAAW</name>
<sequence>MTEHKSGFVSIIGRPNVGKSTFVNRVIGHKIAIMSDKAQTTRNKIQGVMTRDDAQIIFIDTPGIHKPKHKLGDYMMKVAKNTLSEIDAIMFMVNANEEIGRGDEYIIEMLKNVKTPVFLVLNKIDLVHPDELMPKIEEYQSYMDFTEIVPISALEGLNVDHFIDVLKTYLPEGPKYYPDDQISDHPEQFVVGEIIREKILHLTSEEIPHAIGVNVDRMVKESEDRVHIEATIYVERDSQKGIVIGKGGKKLKEVGKRARRDIEMLLGSKVYLELWVKVQRDWRNKVNFIRQIGYVEDQD</sequence>